<reference key="1">
    <citation type="journal article" date="2000" name="Nature">
        <title>Sequence and analysis of chromosome 1 of the plant Arabidopsis thaliana.</title>
        <authorList>
            <person name="Theologis A."/>
            <person name="Ecker J.R."/>
            <person name="Palm C.J."/>
            <person name="Federspiel N.A."/>
            <person name="Kaul S."/>
            <person name="White O."/>
            <person name="Alonso J."/>
            <person name="Altafi H."/>
            <person name="Araujo R."/>
            <person name="Bowman C.L."/>
            <person name="Brooks S.Y."/>
            <person name="Buehler E."/>
            <person name="Chan A."/>
            <person name="Chao Q."/>
            <person name="Chen H."/>
            <person name="Cheuk R.F."/>
            <person name="Chin C.W."/>
            <person name="Chung M.K."/>
            <person name="Conn L."/>
            <person name="Conway A.B."/>
            <person name="Conway A.R."/>
            <person name="Creasy T.H."/>
            <person name="Dewar K."/>
            <person name="Dunn P."/>
            <person name="Etgu P."/>
            <person name="Feldblyum T.V."/>
            <person name="Feng J.-D."/>
            <person name="Fong B."/>
            <person name="Fujii C.Y."/>
            <person name="Gill J.E."/>
            <person name="Goldsmith A.D."/>
            <person name="Haas B."/>
            <person name="Hansen N.F."/>
            <person name="Hughes B."/>
            <person name="Huizar L."/>
            <person name="Hunter J.L."/>
            <person name="Jenkins J."/>
            <person name="Johnson-Hopson C."/>
            <person name="Khan S."/>
            <person name="Khaykin E."/>
            <person name="Kim C.J."/>
            <person name="Koo H.L."/>
            <person name="Kremenetskaia I."/>
            <person name="Kurtz D.B."/>
            <person name="Kwan A."/>
            <person name="Lam B."/>
            <person name="Langin-Hooper S."/>
            <person name="Lee A."/>
            <person name="Lee J.M."/>
            <person name="Lenz C.A."/>
            <person name="Li J.H."/>
            <person name="Li Y.-P."/>
            <person name="Lin X."/>
            <person name="Liu S.X."/>
            <person name="Liu Z.A."/>
            <person name="Luros J.S."/>
            <person name="Maiti R."/>
            <person name="Marziali A."/>
            <person name="Militscher J."/>
            <person name="Miranda M."/>
            <person name="Nguyen M."/>
            <person name="Nierman W.C."/>
            <person name="Osborne B.I."/>
            <person name="Pai G."/>
            <person name="Peterson J."/>
            <person name="Pham P.K."/>
            <person name="Rizzo M."/>
            <person name="Rooney T."/>
            <person name="Rowley D."/>
            <person name="Sakano H."/>
            <person name="Salzberg S.L."/>
            <person name="Schwartz J.R."/>
            <person name="Shinn P."/>
            <person name="Southwick A.M."/>
            <person name="Sun H."/>
            <person name="Tallon L.J."/>
            <person name="Tambunga G."/>
            <person name="Toriumi M.J."/>
            <person name="Town C.D."/>
            <person name="Utterback T."/>
            <person name="Van Aken S."/>
            <person name="Vaysberg M."/>
            <person name="Vysotskaia V.S."/>
            <person name="Walker M."/>
            <person name="Wu D."/>
            <person name="Yu G."/>
            <person name="Fraser C.M."/>
            <person name="Venter J.C."/>
            <person name="Davis R.W."/>
        </authorList>
    </citation>
    <scope>NUCLEOTIDE SEQUENCE [LARGE SCALE GENOMIC DNA]</scope>
    <source>
        <strain>cv. Columbia</strain>
    </source>
</reference>
<reference key="2">
    <citation type="journal article" date="2017" name="Plant J.">
        <title>Araport11: a complete reannotation of the Arabidopsis thaliana reference genome.</title>
        <authorList>
            <person name="Cheng C.Y."/>
            <person name="Krishnakumar V."/>
            <person name="Chan A.P."/>
            <person name="Thibaud-Nissen F."/>
            <person name="Schobel S."/>
            <person name="Town C.D."/>
        </authorList>
    </citation>
    <scope>GENOME REANNOTATION</scope>
    <source>
        <strain>cv. Columbia</strain>
    </source>
</reference>
<reference key="3">
    <citation type="submission" date="2007-01" db="EMBL/GenBank/DDBJ databases">
        <title>Arabidopsis ORF clones.</title>
        <authorList>
            <person name="Kim C.J."/>
            <person name="Bautista V.R."/>
            <person name="Chen H."/>
            <person name="De Los Reyes C."/>
            <person name="Wu S.Y."/>
            <person name="Ecker J.R."/>
        </authorList>
    </citation>
    <scope>NUCLEOTIDE SEQUENCE [LARGE SCALE MRNA] (ISOFORM 2)</scope>
    <source>
        <strain>cv. Columbia</strain>
    </source>
</reference>
<reference key="4">
    <citation type="journal article" date="2007" name="FEBS Lett.">
        <title>Reticulon-like proteins in Arabidopsis thaliana: structural organization and ER localization.</title>
        <authorList>
            <person name="Nziengui H."/>
            <person name="Bouhidel K."/>
            <person name="Pillon D."/>
            <person name="Der C."/>
            <person name="Marty F."/>
            <person name="Schoefs B."/>
        </authorList>
    </citation>
    <scope>GENE FAMILY</scope>
    <scope>NOMENCLATURE</scope>
</reference>
<gene>
    <name type="primary">RTNLB14</name>
    <name type="ordered locus">At1g68230</name>
    <name type="ORF">T22E19.14</name>
</gene>
<name>RTNLN_ARATH</name>
<feature type="chain" id="PRO_0000371295" description="Reticulon-like protein B14">
    <location>
        <begin position="1"/>
        <end position="215"/>
    </location>
</feature>
<feature type="transmembrane region" description="Helical" evidence="2">
    <location>
        <begin position="41"/>
        <end position="61"/>
    </location>
</feature>
<feature type="transmembrane region" description="Helical" evidence="2">
    <location>
        <begin position="62"/>
        <end position="82"/>
    </location>
</feature>
<feature type="transmembrane region" description="Helical" evidence="2">
    <location>
        <begin position="141"/>
        <end position="161"/>
    </location>
</feature>
<feature type="domain" description="Reticulon" evidence="3">
    <location>
        <begin position="31"/>
        <end position="211"/>
    </location>
</feature>
<feature type="splice variant" id="VSP_037008" description="In isoform 2." evidence="4">
    <original>VFV</original>
    <variation>GES</variation>
    <location>
        <begin position="160"/>
        <end position="162"/>
    </location>
</feature>
<feature type="splice variant" id="VSP_037009" description="In isoform 2." evidence="4">
    <location>
        <begin position="163"/>
        <end position="215"/>
    </location>
</feature>
<organism>
    <name type="scientific">Arabidopsis thaliana</name>
    <name type="common">Mouse-ear cress</name>
    <dbReference type="NCBI Taxonomy" id="3702"/>
    <lineage>
        <taxon>Eukaryota</taxon>
        <taxon>Viridiplantae</taxon>
        <taxon>Streptophyta</taxon>
        <taxon>Embryophyta</taxon>
        <taxon>Tracheophyta</taxon>
        <taxon>Spermatophyta</taxon>
        <taxon>Magnoliopsida</taxon>
        <taxon>eudicotyledons</taxon>
        <taxon>Gunneridae</taxon>
        <taxon>Pentapetalae</taxon>
        <taxon>rosids</taxon>
        <taxon>malvids</taxon>
        <taxon>Brassicales</taxon>
        <taxon>Brassicaceae</taxon>
        <taxon>Camelineae</taxon>
        <taxon>Arabidopsis</taxon>
    </lineage>
</organism>
<dbReference type="EMBL" id="AC016447">
    <property type="protein sequence ID" value="AAG52605.1"/>
    <property type="status" value="ALT_SEQ"/>
    <property type="molecule type" value="Genomic_DNA"/>
</dbReference>
<dbReference type="EMBL" id="CP002684">
    <property type="protein sequence ID" value="AEE34767.2"/>
    <property type="molecule type" value="Genomic_DNA"/>
</dbReference>
<dbReference type="EMBL" id="CP002684">
    <property type="protein sequence ID" value="AEE34768.2"/>
    <property type="molecule type" value="Genomic_DNA"/>
</dbReference>
<dbReference type="EMBL" id="BT030077">
    <property type="protein sequence ID" value="ABN04815.1"/>
    <property type="molecule type" value="mRNA"/>
</dbReference>
<dbReference type="PIR" id="G96705">
    <property type="entry name" value="G96705"/>
</dbReference>
<dbReference type="RefSeq" id="NP_001117568.1">
    <molecule id="A2RVT6-2"/>
    <property type="nucleotide sequence ID" value="NM_001124096.2"/>
</dbReference>
<dbReference type="RefSeq" id="NP_001319346.1">
    <molecule id="A2RVT6-1"/>
    <property type="nucleotide sequence ID" value="NM_001334358.1"/>
</dbReference>
<dbReference type="SMR" id="A2RVT6"/>
<dbReference type="FunCoup" id="A2RVT6">
    <property type="interactions" value="167"/>
</dbReference>
<dbReference type="STRING" id="3702.A2RVT6"/>
<dbReference type="PaxDb" id="3702-AT1G68230.2"/>
<dbReference type="ProteomicsDB" id="226615">
    <molecule id="A2RVT6-1"/>
</dbReference>
<dbReference type="EnsemblPlants" id="AT1G68230.1">
    <molecule id="A2RVT6-2"/>
    <property type="protein sequence ID" value="AT1G68230.1"/>
    <property type="gene ID" value="AT1G68230"/>
</dbReference>
<dbReference type="EnsemblPlants" id="AT1G68230.2">
    <molecule id="A2RVT6-1"/>
    <property type="protein sequence ID" value="AT1G68230.2"/>
    <property type="gene ID" value="AT1G68230"/>
</dbReference>
<dbReference type="GeneID" id="843152"/>
<dbReference type="Gramene" id="AT1G68230.1">
    <molecule id="A2RVT6-2"/>
    <property type="protein sequence ID" value="AT1G68230.1"/>
    <property type="gene ID" value="AT1G68230"/>
</dbReference>
<dbReference type="Gramene" id="AT1G68230.2">
    <molecule id="A2RVT6-1"/>
    <property type="protein sequence ID" value="AT1G68230.2"/>
    <property type="gene ID" value="AT1G68230"/>
</dbReference>
<dbReference type="KEGG" id="ath:AT1G68230"/>
<dbReference type="Araport" id="AT1G68230"/>
<dbReference type="TAIR" id="AT1G68230"/>
<dbReference type="eggNOG" id="KOG1792">
    <property type="taxonomic scope" value="Eukaryota"/>
</dbReference>
<dbReference type="InParanoid" id="A2RVT6"/>
<dbReference type="OMA" id="IMYERYE"/>
<dbReference type="OrthoDB" id="567788at2759"/>
<dbReference type="PhylomeDB" id="A2RVT6"/>
<dbReference type="PRO" id="PR:A2RVT6"/>
<dbReference type="Proteomes" id="UP000006548">
    <property type="component" value="Chromosome 1"/>
</dbReference>
<dbReference type="ExpressionAtlas" id="A2RVT6">
    <property type="expression patterns" value="baseline and differential"/>
</dbReference>
<dbReference type="GO" id="GO:0005789">
    <property type="term" value="C:endoplasmic reticulum membrane"/>
    <property type="evidence" value="ECO:0007669"/>
    <property type="project" value="UniProtKB-SubCell"/>
</dbReference>
<dbReference type="GO" id="GO:0009617">
    <property type="term" value="P:response to bacterium"/>
    <property type="evidence" value="ECO:0007669"/>
    <property type="project" value="InterPro"/>
</dbReference>
<dbReference type="InterPro" id="IPR003388">
    <property type="entry name" value="Reticulon"/>
</dbReference>
<dbReference type="InterPro" id="IPR045064">
    <property type="entry name" value="Reticulon-like"/>
</dbReference>
<dbReference type="PANTHER" id="PTHR10994">
    <property type="entry name" value="RETICULON"/>
    <property type="match status" value="1"/>
</dbReference>
<dbReference type="PANTHER" id="PTHR10994:SF157">
    <property type="entry name" value="RETICULON-LIKE PROTEIN B14"/>
    <property type="match status" value="1"/>
</dbReference>
<dbReference type="Pfam" id="PF02453">
    <property type="entry name" value="Reticulon"/>
    <property type="match status" value="1"/>
</dbReference>
<dbReference type="PROSITE" id="PS50845">
    <property type="entry name" value="RETICULON"/>
    <property type="match status" value="1"/>
</dbReference>
<evidence type="ECO:0000250" key="1">
    <source>
        <dbReference type="UniProtKB" id="Q9SH59"/>
    </source>
</evidence>
<evidence type="ECO:0000255" key="2"/>
<evidence type="ECO:0000255" key="3">
    <source>
        <dbReference type="PROSITE-ProRule" id="PRU00170"/>
    </source>
</evidence>
<evidence type="ECO:0000303" key="4">
    <source ref="3"/>
</evidence>
<evidence type="ECO:0000305" key="5"/>
<keyword id="KW-0025">Alternative splicing</keyword>
<keyword id="KW-0256">Endoplasmic reticulum</keyword>
<keyword id="KW-0472">Membrane</keyword>
<keyword id="KW-1185">Reference proteome</keyword>
<keyword id="KW-0812">Transmembrane</keyword>
<keyword id="KW-1133">Transmembrane helix</keyword>
<proteinExistence type="evidence at transcript level"/>
<accession>A2RVT6</accession>
<accession>F4HX72</accession>
<accession>Q9C9F8</accession>
<sequence>MAVFGYEMDEHRASSSRRRRSLYHNLGGGRFADIMFWKNKKESGTILGVFTLIWFLFEVVEYPFITFLCQILLLFIFIFLIWSYIGSSQLIQSKPPSINDLRISESNWRFLFNKINWFIIKLYDISSGKDFRLLFLAVVSLWILSVVGNYFSSLTLLYIVFVGLETIPMLYEQYEEELTYAASKSGRDMKKLLNKFNSKVINKIPKAQAKTRRTM</sequence>
<comment type="subcellular location">
    <subcellularLocation>
        <location evidence="1">Endoplasmic reticulum membrane</location>
        <topology evidence="2">Multi-pass membrane protein</topology>
    </subcellularLocation>
</comment>
<comment type="alternative products">
    <event type="alternative splicing"/>
    <isoform>
        <id>A2RVT6-1</id>
        <name>1</name>
        <sequence type="displayed"/>
    </isoform>
    <isoform>
        <id>A2RVT6-2</id>
        <name>2</name>
        <sequence type="described" ref="VSP_037008 VSP_037009"/>
    </isoform>
</comment>
<comment type="sequence caution" evidence="5">
    <conflict type="erroneous gene model prediction">
        <sequence resource="EMBL-CDS" id="AAG52605"/>
    </conflict>
</comment>
<protein>
    <recommendedName>
        <fullName>Reticulon-like protein B14</fullName>
        <shortName>AtRTNLB14</shortName>
    </recommendedName>
</protein>